<organism>
    <name type="scientific">Paulinella chromatophora</name>
    <dbReference type="NCBI Taxonomy" id="39717"/>
    <lineage>
        <taxon>Eukaryota</taxon>
        <taxon>Sar</taxon>
        <taxon>Rhizaria</taxon>
        <taxon>Cercozoa</taxon>
        <taxon>Imbricatea</taxon>
        <taxon>Silicofilosea</taxon>
        <taxon>Euglyphida</taxon>
        <taxon>Paulinellidae</taxon>
        <taxon>Paulinella</taxon>
    </lineage>
</organism>
<reference key="1">
    <citation type="journal article" date="2008" name="Curr. Biol.">
        <title>Chromatophore genome sequence of Paulinella sheds light on acquisition of photosynthesis by eukaryotes.</title>
        <authorList>
            <person name="Nowack E.C.M."/>
            <person name="Melkonian M."/>
            <person name="Gloeckner G."/>
        </authorList>
    </citation>
    <scope>NUCLEOTIDE SEQUENCE [LARGE SCALE GENOMIC DNA]</scope>
</reference>
<dbReference type="EMBL" id="CP000815">
    <property type="protein sequence ID" value="ACB42872.1"/>
    <property type="molecule type" value="Genomic_DNA"/>
</dbReference>
<dbReference type="RefSeq" id="YP_002049082.1">
    <property type="nucleotide sequence ID" value="NC_011087.1"/>
</dbReference>
<dbReference type="SMR" id="B1X4K3"/>
<dbReference type="GeneID" id="6481849"/>
<dbReference type="GO" id="GO:0070111">
    <property type="term" value="C:organellar chromatophore"/>
    <property type="evidence" value="ECO:0007669"/>
    <property type="project" value="UniProtKB-SubCell"/>
</dbReference>
<dbReference type="GO" id="GO:0009536">
    <property type="term" value="C:plastid"/>
    <property type="evidence" value="ECO:0007669"/>
    <property type="project" value="UniProtKB-KW"/>
</dbReference>
<dbReference type="GO" id="GO:1990904">
    <property type="term" value="C:ribonucleoprotein complex"/>
    <property type="evidence" value="ECO:0007669"/>
    <property type="project" value="UniProtKB-KW"/>
</dbReference>
<dbReference type="GO" id="GO:0005840">
    <property type="term" value="C:ribosome"/>
    <property type="evidence" value="ECO:0007669"/>
    <property type="project" value="UniProtKB-KW"/>
</dbReference>
<dbReference type="GO" id="GO:0019843">
    <property type="term" value="F:rRNA binding"/>
    <property type="evidence" value="ECO:0007669"/>
    <property type="project" value="UniProtKB-KW"/>
</dbReference>
<dbReference type="GO" id="GO:0003735">
    <property type="term" value="F:structural constituent of ribosome"/>
    <property type="evidence" value="ECO:0007669"/>
    <property type="project" value="InterPro"/>
</dbReference>
<dbReference type="GO" id="GO:0006412">
    <property type="term" value="P:translation"/>
    <property type="evidence" value="ECO:0007669"/>
    <property type="project" value="InterPro"/>
</dbReference>
<dbReference type="CDD" id="cd07026">
    <property type="entry name" value="Ribosomal_L20"/>
    <property type="match status" value="1"/>
</dbReference>
<dbReference type="FunFam" id="1.10.1900.20:FF:000001">
    <property type="entry name" value="50S ribosomal protein L20"/>
    <property type="match status" value="1"/>
</dbReference>
<dbReference type="Gene3D" id="6.10.160.10">
    <property type="match status" value="1"/>
</dbReference>
<dbReference type="Gene3D" id="1.10.1900.20">
    <property type="entry name" value="Ribosomal protein L20"/>
    <property type="match status" value="1"/>
</dbReference>
<dbReference type="HAMAP" id="MF_00382">
    <property type="entry name" value="Ribosomal_bL20"/>
    <property type="match status" value="1"/>
</dbReference>
<dbReference type="InterPro" id="IPR005813">
    <property type="entry name" value="Ribosomal_bL20"/>
</dbReference>
<dbReference type="InterPro" id="IPR049946">
    <property type="entry name" value="RIBOSOMAL_L20_CS"/>
</dbReference>
<dbReference type="InterPro" id="IPR035566">
    <property type="entry name" value="Ribosomal_protein_bL20_C"/>
</dbReference>
<dbReference type="NCBIfam" id="TIGR01032">
    <property type="entry name" value="rplT_bact"/>
    <property type="match status" value="1"/>
</dbReference>
<dbReference type="PANTHER" id="PTHR10986">
    <property type="entry name" value="39S RIBOSOMAL PROTEIN L20"/>
    <property type="match status" value="1"/>
</dbReference>
<dbReference type="Pfam" id="PF00453">
    <property type="entry name" value="Ribosomal_L20"/>
    <property type="match status" value="1"/>
</dbReference>
<dbReference type="PRINTS" id="PR00062">
    <property type="entry name" value="RIBOSOMALL20"/>
</dbReference>
<dbReference type="SUPFAM" id="SSF74731">
    <property type="entry name" value="Ribosomal protein L20"/>
    <property type="match status" value="1"/>
</dbReference>
<dbReference type="PROSITE" id="PS00937">
    <property type="entry name" value="RIBOSOMAL_L20"/>
    <property type="match status" value="1"/>
</dbReference>
<evidence type="ECO:0000255" key="1">
    <source>
        <dbReference type="HAMAP-Rule" id="MF_00382"/>
    </source>
</evidence>
<evidence type="ECO:0000305" key="2"/>
<comment type="function">
    <text evidence="1">Binds directly to 23S ribosomal RNA and is necessary for the in vitro assembly process of the 50S ribosomal subunit. It is not involved in the protein synthesizing functions of that subunit.</text>
</comment>
<comment type="subcellular location">
    <subcellularLocation>
        <location>Plastid</location>
        <location>Organellar chromatophore</location>
    </subcellularLocation>
</comment>
<comment type="similarity">
    <text evidence="1">Belongs to the bacterial ribosomal protein bL20 family.</text>
</comment>
<feature type="chain" id="PRO_0000355528" description="Large ribosomal subunit protein bL20c">
    <location>
        <begin position="1"/>
        <end position="115"/>
    </location>
</feature>
<name>RK20_PAUCH</name>
<protein>
    <recommendedName>
        <fullName evidence="1">Large ribosomal subunit protein bL20c</fullName>
    </recommendedName>
    <alternativeName>
        <fullName evidence="2">50S ribosomal protein L20, organellar chromatophore</fullName>
    </alternativeName>
</protein>
<gene>
    <name evidence="1" type="primary">rpl20</name>
    <name type="ordered locus">PCC_0433</name>
</gene>
<keyword id="KW-0994">Organellar chromatophore</keyword>
<keyword id="KW-0934">Plastid</keyword>
<keyword id="KW-0687">Ribonucleoprotein</keyword>
<keyword id="KW-0689">Ribosomal protein</keyword>
<keyword id="KW-0694">RNA-binding</keyword>
<keyword id="KW-0699">rRNA-binding</keyword>
<geneLocation type="organellar chromatophore"/>
<proteinExistence type="inferred from homology"/>
<accession>B1X4K3</accession>
<sequence length="115" mass="13197">MARVKRGNIARKRRNKILRLARGFRGSNGSLFRTANQRVMKALCNAYRDRRRRKRDFRRLWIARINAASRLNGLSYSRLVGSLKKANIKLNRKMLALLALADPTSFANVVVVAKS</sequence>